<reference key="1">
    <citation type="submission" date="2006-03" db="EMBL/GenBank/DDBJ databases">
        <title>Complete sequence of Rhodopseudomonas palustris BisB5.</title>
        <authorList>
            <consortium name="US DOE Joint Genome Institute"/>
            <person name="Copeland A."/>
            <person name="Lucas S."/>
            <person name="Lapidus A."/>
            <person name="Barry K."/>
            <person name="Detter J.C."/>
            <person name="Glavina del Rio T."/>
            <person name="Hammon N."/>
            <person name="Israni S."/>
            <person name="Dalin E."/>
            <person name="Tice H."/>
            <person name="Pitluck S."/>
            <person name="Chain P."/>
            <person name="Malfatti S."/>
            <person name="Shin M."/>
            <person name="Vergez L."/>
            <person name="Schmutz J."/>
            <person name="Larimer F."/>
            <person name="Land M."/>
            <person name="Hauser L."/>
            <person name="Pelletier D.A."/>
            <person name="Kyrpides N."/>
            <person name="Lykidis A."/>
            <person name="Oda Y."/>
            <person name="Harwood C.S."/>
            <person name="Richardson P."/>
        </authorList>
    </citation>
    <scope>NUCLEOTIDE SEQUENCE [LARGE SCALE GENOMIC DNA]</scope>
    <source>
        <strain>BisB5</strain>
    </source>
</reference>
<comment type="function">
    <text evidence="1">Catalyzes the reduction of the glycolytic intermediate dihydroxyacetone phosphate (DHAP) to sn-glycerol 3-phosphate (G3P), the key precursor for phospholipid synthesis.</text>
</comment>
<comment type="catalytic activity">
    <reaction evidence="1">
        <text>sn-glycerol 3-phosphate + NAD(+) = dihydroxyacetone phosphate + NADH + H(+)</text>
        <dbReference type="Rhea" id="RHEA:11092"/>
        <dbReference type="ChEBI" id="CHEBI:15378"/>
        <dbReference type="ChEBI" id="CHEBI:57540"/>
        <dbReference type="ChEBI" id="CHEBI:57597"/>
        <dbReference type="ChEBI" id="CHEBI:57642"/>
        <dbReference type="ChEBI" id="CHEBI:57945"/>
        <dbReference type="EC" id="1.1.1.94"/>
    </reaction>
    <physiologicalReaction direction="right-to-left" evidence="1">
        <dbReference type="Rhea" id="RHEA:11094"/>
    </physiologicalReaction>
</comment>
<comment type="catalytic activity">
    <reaction evidence="1">
        <text>sn-glycerol 3-phosphate + NADP(+) = dihydroxyacetone phosphate + NADPH + H(+)</text>
        <dbReference type="Rhea" id="RHEA:11096"/>
        <dbReference type="ChEBI" id="CHEBI:15378"/>
        <dbReference type="ChEBI" id="CHEBI:57597"/>
        <dbReference type="ChEBI" id="CHEBI:57642"/>
        <dbReference type="ChEBI" id="CHEBI:57783"/>
        <dbReference type="ChEBI" id="CHEBI:58349"/>
        <dbReference type="EC" id="1.1.1.94"/>
    </reaction>
    <physiologicalReaction direction="right-to-left" evidence="1">
        <dbReference type="Rhea" id="RHEA:11098"/>
    </physiologicalReaction>
</comment>
<comment type="pathway">
    <text evidence="1">Membrane lipid metabolism; glycerophospholipid metabolism.</text>
</comment>
<comment type="subcellular location">
    <subcellularLocation>
        <location evidence="1">Cytoplasm</location>
    </subcellularLocation>
</comment>
<comment type="similarity">
    <text evidence="1">Belongs to the NAD-dependent glycerol-3-phosphate dehydrogenase family.</text>
</comment>
<feature type="chain" id="PRO_1000049542" description="Glycerol-3-phosphate dehydrogenase [NAD(P)+]">
    <location>
        <begin position="1"/>
        <end position="329"/>
    </location>
</feature>
<feature type="active site" description="Proton acceptor" evidence="1">
    <location>
        <position position="190"/>
    </location>
</feature>
<feature type="binding site" evidence="1">
    <location>
        <position position="15"/>
    </location>
    <ligand>
        <name>NADPH</name>
        <dbReference type="ChEBI" id="CHEBI:57783"/>
    </ligand>
</feature>
<feature type="binding site" evidence="1">
    <location>
        <position position="35"/>
    </location>
    <ligand>
        <name>NADPH</name>
        <dbReference type="ChEBI" id="CHEBI:57783"/>
    </ligand>
</feature>
<feature type="binding site" evidence="1">
    <location>
        <position position="107"/>
    </location>
    <ligand>
        <name>NADPH</name>
        <dbReference type="ChEBI" id="CHEBI:57783"/>
    </ligand>
</feature>
<feature type="binding site" evidence="1">
    <location>
        <position position="107"/>
    </location>
    <ligand>
        <name>sn-glycerol 3-phosphate</name>
        <dbReference type="ChEBI" id="CHEBI:57597"/>
    </ligand>
</feature>
<feature type="binding site" evidence="1">
    <location>
        <position position="135"/>
    </location>
    <ligand>
        <name>sn-glycerol 3-phosphate</name>
        <dbReference type="ChEBI" id="CHEBI:57597"/>
    </ligand>
</feature>
<feature type="binding site" evidence="1">
    <location>
        <position position="137"/>
    </location>
    <ligand>
        <name>sn-glycerol 3-phosphate</name>
        <dbReference type="ChEBI" id="CHEBI:57597"/>
    </ligand>
</feature>
<feature type="binding site" evidence="1">
    <location>
        <position position="139"/>
    </location>
    <ligand>
        <name>NADPH</name>
        <dbReference type="ChEBI" id="CHEBI:57783"/>
    </ligand>
</feature>
<feature type="binding site" evidence="1">
    <location>
        <position position="190"/>
    </location>
    <ligand>
        <name>sn-glycerol 3-phosphate</name>
        <dbReference type="ChEBI" id="CHEBI:57597"/>
    </ligand>
</feature>
<feature type="binding site" evidence="1">
    <location>
        <position position="243"/>
    </location>
    <ligand>
        <name>sn-glycerol 3-phosphate</name>
        <dbReference type="ChEBI" id="CHEBI:57597"/>
    </ligand>
</feature>
<feature type="binding site" evidence="1">
    <location>
        <position position="253"/>
    </location>
    <ligand>
        <name>sn-glycerol 3-phosphate</name>
        <dbReference type="ChEBI" id="CHEBI:57597"/>
    </ligand>
</feature>
<feature type="binding site" evidence="1">
    <location>
        <position position="254"/>
    </location>
    <ligand>
        <name>NADPH</name>
        <dbReference type="ChEBI" id="CHEBI:57783"/>
    </ligand>
</feature>
<feature type="binding site" evidence="1">
    <location>
        <position position="254"/>
    </location>
    <ligand>
        <name>sn-glycerol 3-phosphate</name>
        <dbReference type="ChEBI" id="CHEBI:57597"/>
    </ligand>
</feature>
<feature type="binding site" evidence="1">
    <location>
        <position position="255"/>
    </location>
    <ligand>
        <name>sn-glycerol 3-phosphate</name>
        <dbReference type="ChEBI" id="CHEBI:57597"/>
    </ligand>
</feature>
<feature type="binding site" evidence="1">
    <location>
        <position position="276"/>
    </location>
    <ligand>
        <name>NADPH</name>
        <dbReference type="ChEBI" id="CHEBI:57783"/>
    </ligand>
</feature>
<feature type="binding site" evidence="1">
    <location>
        <position position="278"/>
    </location>
    <ligand>
        <name>NADPH</name>
        <dbReference type="ChEBI" id="CHEBI:57783"/>
    </ligand>
</feature>
<proteinExistence type="inferred from homology"/>
<name>GPDA_RHOPS</name>
<evidence type="ECO:0000255" key="1">
    <source>
        <dbReference type="HAMAP-Rule" id="MF_00394"/>
    </source>
</evidence>
<sequence>MSAFNSISVLGGGAWGTALALTAARAGRSVTLWEHDPGHAQHLEQTRESRFLPGVMLEPSIKVTRDLAEAARAEALLLVVPAQVLRSVATSLQPLIAARTPLIACAKGIEHGTHRFMTEIIAECAPNAIPAILSGPSFAADVARGLPTAVTIAASDAAIAQALAQAMNSGSFRPYHSTDVRGVELGGATKNVMAIAAGIVAGRKLGASALAAMTTRGFVELVRFGKAYGARIETMHGLSGLGDLTMCCSTPQSRNFSFGMALGRGESIDEAAHGKLAEGYYTAPVLLEMAQAKGVEMPISTAVAAILQGQLGVDAAIEGLLTRPLKAEE</sequence>
<gene>
    <name evidence="1" type="primary">gpsA</name>
    <name type="ordered locus">RPD_0471</name>
</gene>
<keyword id="KW-0963">Cytoplasm</keyword>
<keyword id="KW-0444">Lipid biosynthesis</keyword>
<keyword id="KW-0443">Lipid metabolism</keyword>
<keyword id="KW-0520">NAD</keyword>
<keyword id="KW-0521">NADP</keyword>
<keyword id="KW-0547">Nucleotide-binding</keyword>
<keyword id="KW-0560">Oxidoreductase</keyword>
<keyword id="KW-0594">Phospholipid biosynthesis</keyword>
<keyword id="KW-1208">Phospholipid metabolism</keyword>
<dbReference type="EC" id="1.1.1.94" evidence="1"/>
<dbReference type="EMBL" id="CP000283">
    <property type="protein sequence ID" value="ABE37709.1"/>
    <property type="molecule type" value="Genomic_DNA"/>
</dbReference>
<dbReference type="SMR" id="Q13DY0"/>
<dbReference type="STRING" id="316057.RPD_0471"/>
<dbReference type="KEGG" id="rpd:RPD_0471"/>
<dbReference type="eggNOG" id="COG0240">
    <property type="taxonomic scope" value="Bacteria"/>
</dbReference>
<dbReference type="HOGENOM" id="CLU_033449_0_2_5"/>
<dbReference type="BioCyc" id="RPAL316057:RPD_RS02420-MONOMER"/>
<dbReference type="UniPathway" id="UPA00940"/>
<dbReference type="Proteomes" id="UP000001818">
    <property type="component" value="Chromosome"/>
</dbReference>
<dbReference type="GO" id="GO:0005829">
    <property type="term" value="C:cytosol"/>
    <property type="evidence" value="ECO:0007669"/>
    <property type="project" value="TreeGrafter"/>
</dbReference>
<dbReference type="GO" id="GO:0047952">
    <property type="term" value="F:glycerol-3-phosphate dehydrogenase [NAD(P)+] activity"/>
    <property type="evidence" value="ECO:0007669"/>
    <property type="project" value="UniProtKB-UniRule"/>
</dbReference>
<dbReference type="GO" id="GO:0051287">
    <property type="term" value="F:NAD binding"/>
    <property type="evidence" value="ECO:0007669"/>
    <property type="project" value="InterPro"/>
</dbReference>
<dbReference type="GO" id="GO:0005975">
    <property type="term" value="P:carbohydrate metabolic process"/>
    <property type="evidence" value="ECO:0007669"/>
    <property type="project" value="InterPro"/>
</dbReference>
<dbReference type="GO" id="GO:0046167">
    <property type="term" value="P:glycerol-3-phosphate biosynthetic process"/>
    <property type="evidence" value="ECO:0007669"/>
    <property type="project" value="UniProtKB-UniRule"/>
</dbReference>
<dbReference type="GO" id="GO:0046168">
    <property type="term" value="P:glycerol-3-phosphate catabolic process"/>
    <property type="evidence" value="ECO:0007669"/>
    <property type="project" value="InterPro"/>
</dbReference>
<dbReference type="GO" id="GO:0006650">
    <property type="term" value="P:glycerophospholipid metabolic process"/>
    <property type="evidence" value="ECO:0007669"/>
    <property type="project" value="UniProtKB-UniRule"/>
</dbReference>
<dbReference type="GO" id="GO:0008654">
    <property type="term" value="P:phospholipid biosynthetic process"/>
    <property type="evidence" value="ECO:0007669"/>
    <property type="project" value="UniProtKB-KW"/>
</dbReference>
<dbReference type="FunFam" id="3.40.50.720:FF:000019">
    <property type="entry name" value="Glycerol-3-phosphate dehydrogenase [NAD(P)+]"/>
    <property type="match status" value="1"/>
</dbReference>
<dbReference type="Gene3D" id="1.10.1040.10">
    <property type="entry name" value="N-(1-d-carboxylethyl)-l-norvaline Dehydrogenase, domain 2"/>
    <property type="match status" value="1"/>
</dbReference>
<dbReference type="Gene3D" id="3.40.50.720">
    <property type="entry name" value="NAD(P)-binding Rossmann-like Domain"/>
    <property type="match status" value="1"/>
</dbReference>
<dbReference type="HAMAP" id="MF_00394">
    <property type="entry name" value="NAD_Glyc3P_dehydrog"/>
    <property type="match status" value="1"/>
</dbReference>
<dbReference type="InterPro" id="IPR008927">
    <property type="entry name" value="6-PGluconate_DH-like_C_sf"/>
</dbReference>
<dbReference type="InterPro" id="IPR013328">
    <property type="entry name" value="6PGD_dom2"/>
</dbReference>
<dbReference type="InterPro" id="IPR006168">
    <property type="entry name" value="G3P_DH_NAD-dep"/>
</dbReference>
<dbReference type="InterPro" id="IPR006109">
    <property type="entry name" value="G3P_DH_NAD-dep_C"/>
</dbReference>
<dbReference type="InterPro" id="IPR011128">
    <property type="entry name" value="G3P_DH_NAD-dep_N"/>
</dbReference>
<dbReference type="InterPro" id="IPR036291">
    <property type="entry name" value="NAD(P)-bd_dom_sf"/>
</dbReference>
<dbReference type="NCBIfam" id="NF000940">
    <property type="entry name" value="PRK00094.1-2"/>
    <property type="match status" value="1"/>
</dbReference>
<dbReference type="NCBIfam" id="NF000942">
    <property type="entry name" value="PRK00094.1-4"/>
    <property type="match status" value="1"/>
</dbReference>
<dbReference type="PANTHER" id="PTHR11728">
    <property type="entry name" value="GLYCEROL-3-PHOSPHATE DEHYDROGENASE"/>
    <property type="match status" value="1"/>
</dbReference>
<dbReference type="PANTHER" id="PTHR11728:SF1">
    <property type="entry name" value="GLYCEROL-3-PHOSPHATE DEHYDROGENASE [NAD(+)] 2, CHLOROPLASTIC"/>
    <property type="match status" value="1"/>
</dbReference>
<dbReference type="Pfam" id="PF07479">
    <property type="entry name" value="NAD_Gly3P_dh_C"/>
    <property type="match status" value="1"/>
</dbReference>
<dbReference type="Pfam" id="PF01210">
    <property type="entry name" value="NAD_Gly3P_dh_N"/>
    <property type="match status" value="1"/>
</dbReference>
<dbReference type="PIRSF" id="PIRSF000114">
    <property type="entry name" value="Glycerol-3-P_dh"/>
    <property type="match status" value="1"/>
</dbReference>
<dbReference type="PRINTS" id="PR00077">
    <property type="entry name" value="GPDHDRGNASE"/>
</dbReference>
<dbReference type="SUPFAM" id="SSF48179">
    <property type="entry name" value="6-phosphogluconate dehydrogenase C-terminal domain-like"/>
    <property type="match status" value="1"/>
</dbReference>
<dbReference type="SUPFAM" id="SSF51735">
    <property type="entry name" value="NAD(P)-binding Rossmann-fold domains"/>
    <property type="match status" value="1"/>
</dbReference>
<dbReference type="PROSITE" id="PS00957">
    <property type="entry name" value="NAD_G3PDH"/>
    <property type="match status" value="1"/>
</dbReference>
<accession>Q13DY0</accession>
<protein>
    <recommendedName>
        <fullName evidence="1">Glycerol-3-phosphate dehydrogenase [NAD(P)+]</fullName>
        <ecNumber evidence="1">1.1.1.94</ecNumber>
    </recommendedName>
    <alternativeName>
        <fullName evidence="1">NAD(P)(+)-dependent glycerol-3-phosphate dehydrogenase</fullName>
    </alternativeName>
    <alternativeName>
        <fullName evidence="1">NAD(P)H-dependent dihydroxyacetone-phosphate reductase</fullName>
    </alternativeName>
</protein>
<organism>
    <name type="scientific">Rhodopseudomonas palustris (strain BisB5)</name>
    <dbReference type="NCBI Taxonomy" id="316057"/>
    <lineage>
        <taxon>Bacteria</taxon>
        <taxon>Pseudomonadati</taxon>
        <taxon>Pseudomonadota</taxon>
        <taxon>Alphaproteobacteria</taxon>
        <taxon>Hyphomicrobiales</taxon>
        <taxon>Nitrobacteraceae</taxon>
        <taxon>Rhodopseudomonas</taxon>
    </lineage>
</organism>